<comment type="function">
    <text evidence="1">Involved in the uptake of ammonium/ammonia (NH(4)(+)/NH(3)) (By similarity). Transport is electrogenic (By similarity).</text>
</comment>
<comment type="subunit">
    <text evidence="1 5">Homotrimer (By similarity). Interacts with both GlnK1 and GlnK2 after ammonium shock (PubMed:24039236). Interaction is rapid, reversible and dependent on nitrogen source (PubMed:24039236).</text>
</comment>
<comment type="subcellular location">
    <subcellularLocation>
        <location evidence="5">Cell membrane</location>
        <topology evidence="3">Multi-pass membrane protein</topology>
    </subcellularLocation>
</comment>
<comment type="induction">
    <text evidence="5">Highly expressed during ammonium starvation under nitrate-rich conditions.</text>
</comment>
<comment type="similarity">
    <text evidence="8">Belongs to the ammonia transporter channel (TC 1.A.11.2) family.</text>
</comment>
<gene>
    <name evidence="7" type="primary">amt1</name>
    <name evidence="6" type="synonym">amtB1</name>
    <name evidence="9" type="ordered locus">HFX_0095</name>
    <name evidence="10" type="ORF">BM92_08805</name>
</gene>
<keyword id="KW-0924">Ammonia transport</keyword>
<keyword id="KW-1003">Cell membrane</keyword>
<keyword id="KW-0472">Membrane</keyword>
<keyword id="KW-0812">Transmembrane</keyword>
<keyword id="KW-1133">Transmembrane helix</keyword>
<keyword id="KW-0813">Transport</keyword>
<name>AMT1_HALMT</name>
<organism>
    <name type="scientific">Haloferax mediterranei (strain ATCC 33500 / DSM 1411 / JCM 8866 / NBRC 14739 / NCIMB 2177 / R-4)</name>
    <name type="common">Halobacterium mediterranei</name>
    <dbReference type="NCBI Taxonomy" id="523841"/>
    <lineage>
        <taxon>Archaea</taxon>
        <taxon>Methanobacteriati</taxon>
        <taxon>Methanobacteriota</taxon>
        <taxon>Stenosarchaea group</taxon>
        <taxon>Halobacteria</taxon>
        <taxon>Halobacteriales</taxon>
        <taxon>Haloferacaceae</taxon>
        <taxon>Haloferax</taxon>
    </lineage>
</organism>
<protein>
    <recommendedName>
        <fullName evidence="8">Ammonium transporter Amt1</fullName>
    </recommendedName>
</protein>
<accession>I3R0S7</accession>
<accession>B8ZYW2</accession>
<dbReference type="EMBL" id="CP001868">
    <property type="protein sequence ID" value="AFK17837.1"/>
    <property type="molecule type" value="Genomic_DNA"/>
</dbReference>
<dbReference type="EMBL" id="CP007551">
    <property type="protein sequence ID" value="AHZ22737.1"/>
    <property type="molecule type" value="Genomic_DNA"/>
</dbReference>
<dbReference type="EMBL" id="FM991873">
    <property type="protein sequence ID" value="CAX20372.1"/>
    <property type="molecule type" value="Genomic_DNA"/>
</dbReference>
<dbReference type="RefSeq" id="WP_014732039.1">
    <property type="nucleotide sequence ID" value="NC_017941.2"/>
</dbReference>
<dbReference type="SMR" id="I3R0S7"/>
<dbReference type="STRING" id="523841.HFX_0095"/>
<dbReference type="TCDB" id="1.A.11.2.11">
    <property type="family name" value="the ammonium transporter channel (amt) family"/>
</dbReference>
<dbReference type="GeneID" id="40155465"/>
<dbReference type="KEGG" id="hme:HFX_0095"/>
<dbReference type="eggNOG" id="arCOG04397">
    <property type="taxonomic scope" value="Archaea"/>
</dbReference>
<dbReference type="HOGENOM" id="CLU_000445_33_1_2"/>
<dbReference type="Proteomes" id="UP000006469">
    <property type="component" value="Chromosome"/>
</dbReference>
<dbReference type="Proteomes" id="UP000027075">
    <property type="component" value="Chromosome"/>
</dbReference>
<dbReference type="GO" id="GO:0005886">
    <property type="term" value="C:plasma membrane"/>
    <property type="evidence" value="ECO:0007669"/>
    <property type="project" value="UniProtKB-SubCell"/>
</dbReference>
<dbReference type="GO" id="GO:0008519">
    <property type="term" value="F:ammonium channel activity"/>
    <property type="evidence" value="ECO:0007669"/>
    <property type="project" value="InterPro"/>
</dbReference>
<dbReference type="GO" id="GO:0097272">
    <property type="term" value="P:ammonium homeostasis"/>
    <property type="evidence" value="ECO:0007669"/>
    <property type="project" value="TreeGrafter"/>
</dbReference>
<dbReference type="Gene3D" id="1.10.3430.10">
    <property type="entry name" value="Ammonium transporter AmtB like domains"/>
    <property type="match status" value="1"/>
</dbReference>
<dbReference type="InterPro" id="IPR029020">
    <property type="entry name" value="Ammonium/urea_transptr"/>
</dbReference>
<dbReference type="InterPro" id="IPR024041">
    <property type="entry name" value="NH4_transpt_AmtB-like_dom"/>
</dbReference>
<dbReference type="PANTHER" id="PTHR11730">
    <property type="entry name" value="AMMONIUM TRANSPORTER"/>
    <property type="match status" value="1"/>
</dbReference>
<dbReference type="PANTHER" id="PTHR11730:SF6">
    <property type="entry name" value="AMMONIUM TRANSPORTER"/>
    <property type="match status" value="1"/>
</dbReference>
<dbReference type="Pfam" id="PF00909">
    <property type="entry name" value="Ammonium_transp"/>
    <property type="match status" value="1"/>
</dbReference>
<dbReference type="SUPFAM" id="SSF111352">
    <property type="entry name" value="Ammonium transporter"/>
    <property type="match status" value="1"/>
</dbReference>
<evidence type="ECO:0000250" key="1">
    <source>
        <dbReference type="UniProtKB" id="O29285"/>
    </source>
</evidence>
<evidence type="ECO:0000250" key="2">
    <source>
        <dbReference type="UniProtKB" id="P69681"/>
    </source>
</evidence>
<evidence type="ECO:0000255" key="3"/>
<evidence type="ECO:0000256" key="4">
    <source>
        <dbReference type="SAM" id="MobiDB-lite"/>
    </source>
</evidence>
<evidence type="ECO:0000269" key="5">
    <source>
    </source>
</evidence>
<evidence type="ECO:0000303" key="6">
    <source>
    </source>
</evidence>
<evidence type="ECO:0000303" key="7">
    <source ref="3"/>
</evidence>
<evidence type="ECO:0000305" key="8"/>
<evidence type="ECO:0000312" key="9">
    <source>
        <dbReference type="EMBL" id="AFK17837.1"/>
    </source>
</evidence>
<evidence type="ECO:0000312" key="10">
    <source>
        <dbReference type="EMBL" id="AHZ22737.1"/>
    </source>
</evidence>
<reference key="1">
    <citation type="journal article" date="2012" name="J. Bacteriol.">
        <title>Complete genome sequence of the metabolically versatile halophilic archaeon Haloferax mediterranei, a poly(3-hydroxybutyrate-co-3-hydroxyvalerate) producer.</title>
        <authorList>
            <person name="Han J."/>
            <person name="Zhang F."/>
            <person name="Hou J."/>
            <person name="Liu X."/>
            <person name="Li M."/>
            <person name="Liu H."/>
            <person name="Cai L."/>
            <person name="Zhang B."/>
            <person name="Chen Y."/>
            <person name="Zhou J."/>
            <person name="Hu S."/>
            <person name="Xiang H."/>
        </authorList>
    </citation>
    <scope>NUCLEOTIDE SEQUENCE [LARGE SCALE GENOMIC DNA]</scope>
    <source>
        <strain>ATCC 33500 / DSM 1411 / JCM 8866 / NBRC 14739 / NCIMB 2177 / R-4</strain>
    </source>
</reference>
<reference key="2">
    <citation type="submission" date="2014-04" db="EMBL/GenBank/DDBJ databases">
        <title>Transcriptional profiles of Haloferax mediterranei on the basis of nitrogen availability.</title>
        <authorList>
            <person name="Bautista V."/>
        </authorList>
    </citation>
    <scope>NUCLEOTIDE SEQUENCE [LARGE SCALE GENOMIC DNA]</scope>
    <source>
        <strain>ATCC 33500 / DSM 1411 / JCM 8866 / NBRC 14739 / NCIMB 2177 / R-4</strain>
    </source>
</reference>
<reference key="3">
    <citation type="submission" date="2009-01" db="EMBL/GenBank/DDBJ databases">
        <title>Localization of an ammonium transporter protein from Haloferax mediterranei.</title>
        <authorList>
            <person name="Camacho M."/>
            <person name="Pedro-Roig L."/>
            <person name="Bonete M.J."/>
        </authorList>
    </citation>
    <scope>NUCLEOTIDE SEQUENCE [GENOMIC DNA] OF 30-516</scope>
    <source>
        <strain>ATCC 33500 / DSM 1411 / JCM 8866 / NBRC 14739 / NCIMB 2177 / R-4</strain>
    </source>
</reference>
<reference key="4">
    <citation type="journal article" date="2013" name="MicrobiologyOpen">
        <title>Nitrogen regulation of protein-protein interactions and transcript levels of GlnK PII regulator and AmtB ammonium transporter homologs in Archaea.</title>
        <authorList>
            <person name="Pedro-Roig L."/>
            <person name="Lange C."/>
            <person name="Bonete M.J."/>
            <person name="Soppa J."/>
            <person name="Maupin-Furlow J."/>
        </authorList>
    </citation>
    <scope>INTERACTION WITH GLNK1 AND GLNK2</scope>
    <scope>SUBCELLULAR LOCATION</scope>
    <scope>INDUCTION</scope>
    <source>
        <strain>ATCC 33500 / DSM 1411 / JCM 8866 / NBRC 14739 / NCIMB 2177 / R-4</strain>
    </source>
</reference>
<feature type="chain" id="PRO_0000453008" description="Ammonium transporter Amt1">
    <location>
        <begin position="1"/>
        <end position="516"/>
    </location>
</feature>
<feature type="transmembrane region" description="Helical" evidence="3">
    <location>
        <begin position="17"/>
        <end position="37"/>
    </location>
</feature>
<feature type="transmembrane region" description="Helical" evidence="3">
    <location>
        <begin position="59"/>
        <end position="79"/>
    </location>
</feature>
<feature type="transmembrane region" description="Helical" evidence="3">
    <location>
        <begin position="101"/>
        <end position="121"/>
    </location>
</feature>
<feature type="transmembrane region" description="Helical" evidence="3">
    <location>
        <begin position="130"/>
        <end position="150"/>
    </location>
</feature>
<feature type="transmembrane region" description="Helical" evidence="3">
    <location>
        <begin position="170"/>
        <end position="190"/>
    </location>
</feature>
<feature type="transmembrane region" description="Helical" evidence="3">
    <location>
        <begin position="214"/>
        <end position="234"/>
    </location>
</feature>
<feature type="transmembrane region" description="Helical" evidence="3">
    <location>
        <begin position="258"/>
        <end position="278"/>
    </location>
</feature>
<feature type="transmembrane region" description="Helical" evidence="3">
    <location>
        <begin position="286"/>
        <end position="306"/>
    </location>
</feature>
<feature type="transmembrane region" description="Helical" evidence="3">
    <location>
        <begin position="307"/>
        <end position="327"/>
    </location>
</feature>
<feature type="transmembrane region" description="Helical" evidence="3">
    <location>
        <begin position="342"/>
        <end position="362"/>
    </location>
</feature>
<feature type="transmembrane region" description="Helical" evidence="3">
    <location>
        <begin position="374"/>
        <end position="394"/>
    </location>
</feature>
<feature type="region of interest" description="Disordered" evidence="4">
    <location>
        <begin position="426"/>
        <end position="516"/>
    </location>
</feature>
<feature type="compositionally biased region" description="Basic and acidic residues" evidence="4">
    <location>
        <begin position="445"/>
        <end position="491"/>
    </location>
</feature>
<feature type="site" description="Twin-His motif. Important for optimum substrate conductance" evidence="2">
    <location>
        <position position="179"/>
    </location>
</feature>
<feature type="site" description="Twin-His motif. Important for optimum substrate conductance" evidence="2">
    <location>
        <position position="346"/>
    </location>
</feature>
<feature type="sequence conflict" description="In Ref. 3; CAX20372." evidence="8" ref="3">
    <location>
        <begin position="441"/>
        <end position="464"/>
    </location>
</feature>
<sequence length="516" mass="52311">MIPLQVDPNVVAQGVNYVWILVVSFLIFFMQPGFALLEAGQVRAKNVGNVLMKNMTDWALGVLVYFVVGAGVATIVGGLTSPGGFDVAAAFSYIGDSGAWIDWLFGAVFAMTAATIVSGAVAERMDFRAYVVFAATITGFIYPVVQGLTWSGGLLSGSGYLGAALGVGYLDFAGATVVHMCGGVAGLVGAKMVGPRKGRFGASGESQPIPGHSMLLAVLGTLILAFGWYGFNVGTQATVLATTESGGLEFMGAALGRVALVTTLGMGAGAVAAMVVSTNYQGKPDPLWMANGLLAGLVAVTGAVPHVTWWGGLVLGALGGAIVLPAYRWTVDSLKIDDVCGVFAVHGVAGAVGTALIPVFAVGGFSATQLVMQVAGVGIIALWTIVASAVVFAAAGTVFGLRVSEEEELEGLDIGEHGVSVYPEFIGESGPDRGVGTRAATDGGNDVRTDGGNDVRTDGGNDVRTDGGNDVRTDGGNDVRTDGGNDVRTDGDVVGDNGVAVTEGNDSAAVDGGENQ</sequence>
<proteinExistence type="evidence at protein level"/>